<feature type="chain" id="PRO_0000347128" description="Large ribosomal subunit protein uL30">
    <location>
        <begin position="1"/>
        <end position="61"/>
    </location>
</feature>
<reference key="1">
    <citation type="submission" date="2007-11" db="EMBL/GenBank/DDBJ databases">
        <title>Complete sequence of Petroga mobilis SJ95.</title>
        <authorList>
            <consortium name="US DOE Joint Genome Institute"/>
            <person name="Copeland A."/>
            <person name="Lucas S."/>
            <person name="Lapidus A."/>
            <person name="Barry K."/>
            <person name="Glavina del Rio T."/>
            <person name="Dalin E."/>
            <person name="Tice H."/>
            <person name="Pitluck S."/>
            <person name="Meincke L."/>
            <person name="Brettin T."/>
            <person name="Bruce D."/>
            <person name="Detter J.C."/>
            <person name="Han C."/>
            <person name="Kuske C.R."/>
            <person name="Schmutz J."/>
            <person name="Larimer F."/>
            <person name="Land M."/>
            <person name="Hauser L."/>
            <person name="Kyrpides N."/>
            <person name="Mikhailova N."/>
            <person name="Noll K."/>
            <person name="Richardson P."/>
        </authorList>
    </citation>
    <scope>NUCLEOTIDE SEQUENCE [LARGE SCALE GENOMIC DNA]</scope>
    <source>
        <strain>DSM 10674 / SJ95</strain>
    </source>
</reference>
<proteinExistence type="inferred from homology"/>
<sequence>MSSLKIKLVKGRAGKDKRQLATLDALDLTRKDKVVIKPDNPQIRGMIRTVHHLVEWEEIDS</sequence>
<organism>
    <name type="scientific">Petrotoga mobilis (strain DSM 10674 / SJ95)</name>
    <dbReference type="NCBI Taxonomy" id="403833"/>
    <lineage>
        <taxon>Bacteria</taxon>
        <taxon>Thermotogati</taxon>
        <taxon>Thermotogota</taxon>
        <taxon>Thermotogae</taxon>
        <taxon>Petrotogales</taxon>
        <taxon>Petrotogaceae</taxon>
        <taxon>Petrotoga</taxon>
    </lineage>
</organism>
<keyword id="KW-0687">Ribonucleoprotein</keyword>
<keyword id="KW-0689">Ribosomal protein</keyword>
<dbReference type="EMBL" id="CP000879">
    <property type="protein sequence ID" value="ABX31496.1"/>
    <property type="molecule type" value="Genomic_DNA"/>
</dbReference>
<dbReference type="RefSeq" id="WP_012208599.1">
    <property type="nucleotide sequence ID" value="NC_010003.1"/>
</dbReference>
<dbReference type="SMR" id="A9BG00"/>
<dbReference type="STRING" id="403833.Pmob_0772"/>
<dbReference type="KEGG" id="pmo:Pmob_0772"/>
<dbReference type="eggNOG" id="COG1841">
    <property type="taxonomic scope" value="Bacteria"/>
</dbReference>
<dbReference type="HOGENOM" id="CLU_131047_2_0_0"/>
<dbReference type="OrthoDB" id="9812790at2"/>
<dbReference type="Proteomes" id="UP000000789">
    <property type="component" value="Chromosome"/>
</dbReference>
<dbReference type="GO" id="GO:0015934">
    <property type="term" value="C:large ribosomal subunit"/>
    <property type="evidence" value="ECO:0007669"/>
    <property type="project" value="InterPro"/>
</dbReference>
<dbReference type="GO" id="GO:0003735">
    <property type="term" value="F:structural constituent of ribosome"/>
    <property type="evidence" value="ECO:0007669"/>
    <property type="project" value="InterPro"/>
</dbReference>
<dbReference type="GO" id="GO:0006412">
    <property type="term" value="P:translation"/>
    <property type="evidence" value="ECO:0007669"/>
    <property type="project" value="UniProtKB-UniRule"/>
</dbReference>
<dbReference type="CDD" id="cd01658">
    <property type="entry name" value="Ribosomal_L30"/>
    <property type="match status" value="1"/>
</dbReference>
<dbReference type="Gene3D" id="3.30.1390.20">
    <property type="entry name" value="Ribosomal protein L30, ferredoxin-like fold domain"/>
    <property type="match status" value="1"/>
</dbReference>
<dbReference type="HAMAP" id="MF_01371_B">
    <property type="entry name" value="Ribosomal_uL30_B"/>
    <property type="match status" value="1"/>
</dbReference>
<dbReference type="InterPro" id="IPR036919">
    <property type="entry name" value="Ribo_uL30_ferredoxin-like_sf"/>
</dbReference>
<dbReference type="InterPro" id="IPR005996">
    <property type="entry name" value="Ribosomal_uL30_bac-type"/>
</dbReference>
<dbReference type="InterPro" id="IPR016082">
    <property type="entry name" value="Ribosomal_uL30_ferredoxin-like"/>
</dbReference>
<dbReference type="NCBIfam" id="TIGR01308">
    <property type="entry name" value="rpmD_bact"/>
    <property type="match status" value="1"/>
</dbReference>
<dbReference type="Pfam" id="PF00327">
    <property type="entry name" value="Ribosomal_L30"/>
    <property type="match status" value="1"/>
</dbReference>
<dbReference type="PIRSF" id="PIRSF002211">
    <property type="entry name" value="Ribosomal_L30_bac-type"/>
    <property type="match status" value="1"/>
</dbReference>
<dbReference type="SUPFAM" id="SSF55129">
    <property type="entry name" value="Ribosomal protein L30p/L7e"/>
    <property type="match status" value="1"/>
</dbReference>
<protein>
    <recommendedName>
        <fullName evidence="1">Large ribosomal subunit protein uL30</fullName>
    </recommendedName>
    <alternativeName>
        <fullName evidence="2">50S ribosomal protein L30</fullName>
    </alternativeName>
</protein>
<gene>
    <name evidence="1" type="primary">rpmD</name>
    <name type="ordered locus">Pmob_0772</name>
</gene>
<comment type="subunit">
    <text evidence="1">Part of the 50S ribosomal subunit.</text>
</comment>
<comment type="similarity">
    <text evidence="1">Belongs to the universal ribosomal protein uL30 family.</text>
</comment>
<accession>A9BG00</accession>
<evidence type="ECO:0000255" key="1">
    <source>
        <dbReference type="HAMAP-Rule" id="MF_01371"/>
    </source>
</evidence>
<evidence type="ECO:0000305" key="2"/>
<name>RL30_PETMO</name>